<comment type="function">
    <text evidence="5 6 7 8">Zinc finger nuclear factor involved in transcription by regulating chromatin structure and organization (PubMed:20219459, PubMed:21570965). Involved in the pluripotency and differentiation of embryonic stem cells by regulating SOX2, POU5F1/OCT4, and NANOG (PubMed:21570965). By binding PBX1, prevents the heterodimerization of PBX1 and HOXA9 and their binding to DNA (PubMed:17353115). Regulates neuronal development and neural cell differentiation (PubMed:21570965, PubMed:27621227).</text>
</comment>
<comment type="subunit">
    <text evidence="5">Interacts with PBX1 isoform PBX1b; this interaction prevents PBX1-HOXA9 heterodimer from forming and binding to DNA.</text>
</comment>
<comment type="subcellular location">
    <subcellularLocation>
        <location evidence="5 6 7">Nucleus</location>
    </subcellularLocation>
</comment>
<comment type="tissue specificity">
    <text evidence="4 5 6 8">Expressed in the cerebral cortex (at protein level) (PubMed:17207666, PubMed:27621227). Expressed in embryonic stem cells (at protein level) (PubMed:20219459). Expressed in heart, liver, kidney, muscle, and female and male genital tracts (at protein level) (PubMed:17353115, PubMed:27621227).</text>
</comment>
<comment type="developmental stage">
    <text evidence="4 5 6 8">Detected at 6.5 days post coitum (dpc) in the developing central nervous system (PubMed:17207666). At 7.75 dpc, expression is limited to the headfolds (PubMed:17207666). At 8 dpc, transcripts are detected in the midline neural groove (PubMed:17207666). Between 8 dpc and 9.5 dpc, it is found in the developing forebrain, brainstem, spinal cord, branchial arches, otic vesicles, midbrain and hindbrain folds (PubMed:17207666, PubMed:17353115). At 10.5 dpc, expression is detected in the telencephalic vesicles, branchial arches, otic vesicles, dorsal root ganglia, somites, spinal cord and forelimb buds, specifically in migratory muscle progenitor cells (PubMed:17207666). At 11.5 dpc, it is detected in telencephalic vesicles, midbrain-hindbrain boundary, the spinal cord, branchial arches, dorsal root ganglia, fore- and hindlimb buds and somites (PubMed:17207666, PubMed:17353115). Also detected at 11.5 dpc throughout the wall of the telencephalic vesicle and the medial and lateral ganglionic eminence (PubMed:17353115). At 14.5 dpc, expression is detected in the entire cerebral cortex, with higher levels in the developing hippocampus and septal area (PubMed:17207666). Expression becomes more graded by 16.5 and 18.5 dpc, where it is detected in the caudal and medial cerebral cortex, hippocampus and retrosplenial cortex (PubMed:17207666). Detected at 16.5 dpc in female genital tract (PubMed:17353115). It is also detected in the olfactory bud at 18.5 dpc (PubMed:17207666). Detected at 9.5 dpc in embryos (PubMed:20219459). Detected from 7.5 dpc in the brain, with highest levels of expression being detected at postnatal day 1 (PubMed:27621227). Expression remains at high levels at postnatal day 7 and begins to decrease by postnatal day 14 (PubMed:27621227). Expression is decreased further by postnatal day 30 (PubMed:27621227).</text>
</comment>
<comment type="disruption phenotype">
    <text evidence="8">Embryonic lethal (PubMed:27621227). Knockout mice do not develop past 18.5 days post coitum and exhibit smaller sized eyes with neural-tube defects (PubMed:27621227). Heterozygous mice exhibit decreased expression and delayed development (PubMed:27621227). Heterozygous mice grow slower, weigh less than wild-type mice and have significantly reduced brain weight (PubMed:27621227). They also exhibit lowered levels of PBX1 and HOXB8 (PubMed:27621227). Mice also exhibit anxiety-like behaviors with excessive grooming, resulting in gradual hair loss (PubMed:27621227).</text>
</comment>
<reference evidence="12" key="1">
    <citation type="journal article" date="2007" name="Gene Expr. Patterns">
        <title>Graded expression of Zfp462 in the embryonic mouse cerebral cortex.</title>
        <authorList>
            <person name="Chang Y.S."/>
            <person name="Stoykova A."/>
            <person name="Chowdhury K."/>
            <person name="Gruss P."/>
        </authorList>
    </citation>
    <scope>NUCLEOTIDE SEQUENCE [MRNA]</scope>
    <scope>TISSUE SPECIFICITY</scope>
    <scope>DEVELOPMENTAL STAGE</scope>
    <source>
        <strain evidence="12">CD-1</strain>
        <tissue evidence="12">Brain</tissue>
    </source>
</reference>
<reference evidence="14" key="2">
    <citation type="journal article" date="2009" name="PLoS Biol.">
        <title>Lineage-specific biology revealed by a finished genome assembly of the mouse.</title>
        <authorList>
            <person name="Church D.M."/>
            <person name="Goodstadt L."/>
            <person name="Hillier L.W."/>
            <person name="Zody M.C."/>
            <person name="Goldstein S."/>
            <person name="She X."/>
            <person name="Bult C.J."/>
            <person name="Agarwala R."/>
            <person name="Cherry J.L."/>
            <person name="DiCuccio M."/>
            <person name="Hlavina W."/>
            <person name="Kapustin Y."/>
            <person name="Meric P."/>
            <person name="Maglott D."/>
            <person name="Birtle Z."/>
            <person name="Marques A.C."/>
            <person name="Graves T."/>
            <person name="Zhou S."/>
            <person name="Teague B."/>
            <person name="Potamousis K."/>
            <person name="Churas C."/>
            <person name="Place M."/>
            <person name="Herschleb J."/>
            <person name="Runnheim R."/>
            <person name="Forrest D."/>
            <person name="Amos-Landgraf J."/>
            <person name="Schwartz D.C."/>
            <person name="Cheng Z."/>
            <person name="Lindblad-Toh K."/>
            <person name="Eichler E.E."/>
            <person name="Ponting C.P."/>
        </authorList>
    </citation>
    <scope>NUCLEOTIDE SEQUENCE [LARGE SCALE GENOMIC DNA]</scope>
    <source>
        <strain evidence="14">C57BL/6J</strain>
    </source>
</reference>
<reference evidence="11" key="3">
    <citation type="journal article" date="2007" name="Mech. Dev.">
        <title>Identification of a new type of PBX1 partner that contains zinc finger motifs and inhibits the binding of HOXA9-PBX1 to DNA.</title>
        <authorList>
            <person name="Laurent A."/>
            <person name="Bihan R."/>
            <person name="Deschamps S."/>
            <person name="Guerrier D."/>
            <person name="Dupe V."/>
            <person name="Omilli F."/>
            <person name="Burel A."/>
            <person name="Pellerin I."/>
        </authorList>
    </citation>
    <scope>FUNCTION</scope>
    <scope>INTERACTION WITH PBX1 ISOFORM PBX1B</scope>
    <scope>SUBCELLULAR LOCATION</scope>
    <scope>TISSUE SPECIFICITY</scope>
    <scope>DEVELOPMENTAL STAGE</scope>
</reference>
<reference evidence="15" key="4">
    <citation type="journal article" date="2010" name="Cell">
        <title>A tissue-specific atlas of mouse protein phosphorylation and expression.</title>
        <authorList>
            <person name="Huttlin E.L."/>
            <person name="Jedrychowski M.P."/>
            <person name="Elias J.E."/>
            <person name="Goswami T."/>
            <person name="Rad R."/>
            <person name="Beausoleil S.A."/>
            <person name="Villen J."/>
            <person name="Haas W."/>
            <person name="Sowa M.E."/>
            <person name="Gygi S.P."/>
        </authorList>
    </citation>
    <scope>IDENTIFICATION BY MASS SPECTROMETRY [LARGE SCALE ANALYSIS]</scope>
</reference>
<reference evidence="11" key="5">
    <citation type="journal article" date="2010" name="Exp. Cell Res.">
        <title>Involvement of ZFPIP/Zfp462 in chromatin integrity and survival of P19 pluripotent cells.</title>
        <authorList>
            <person name="Masse J."/>
            <person name="Laurent A."/>
            <person name="Nicol B."/>
            <person name="Guerrier D."/>
            <person name="Pellerin I."/>
            <person name="Deschamps S."/>
        </authorList>
    </citation>
    <scope>FUNCTION</scope>
    <scope>SUBCELLULAR LOCATION</scope>
    <scope>TISSUE SPECIFICITY</scope>
    <scope>DEVELOPMENTAL STAGE</scope>
</reference>
<reference evidence="11" key="6">
    <citation type="journal article" date="2011" name="Exp. Cell Res.">
        <title>ZFPIP/Zfp462 is involved in P19 cell pluripotency and in their neuronal fate.</title>
        <authorList>
            <person name="Masse J."/>
            <person name="Piquet-Pellorce C."/>
            <person name="Viet J."/>
            <person name="Guerrier D."/>
            <person name="Pellerin I."/>
            <person name="Deschamps S."/>
        </authorList>
    </citation>
    <scope>FUNCTION</scope>
    <scope>SUBCELLULAR LOCATION</scope>
</reference>
<reference evidence="11" key="7">
    <citation type="journal article" date="2017" name="Genes Brain Behav.">
        <title>Zfp462 deficiency causes anxiety-like behaviors with excessive self-grooming in mice.</title>
        <authorList>
            <person name="Wang B."/>
            <person name="Zheng Y."/>
            <person name="Shi H."/>
            <person name="Du X."/>
            <person name="Zhang Y."/>
            <person name="Wei B."/>
            <person name="Luo M."/>
            <person name="Wang H."/>
            <person name="Wu X."/>
            <person name="Hua X."/>
            <person name="Sun M."/>
            <person name="Xu X."/>
        </authorList>
    </citation>
    <scope>FUNCTION</scope>
    <scope>TISSUE SPECIFICITY</scope>
    <scope>DEVELOPMENTAL STAGE</scope>
    <scope>DISRUPTION PHENOTYPE</scope>
</reference>
<feature type="chain" id="PRO_0000445627" description="Zinc finger protein 462">
    <location>
        <begin position="1"/>
        <end position="2495"/>
    </location>
</feature>
<feature type="zinc finger region" description="C2H2-type 1" evidence="2">
    <location>
        <begin position="4"/>
        <end position="27"/>
    </location>
</feature>
<feature type="zinc finger region" description="C2H2-type 2" evidence="2">
    <location>
        <begin position="108"/>
        <end position="131"/>
    </location>
</feature>
<feature type="zinc finger region" description="C2H2-type 3" evidence="2">
    <location>
        <begin position="162"/>
        <end position="185"/>
    </location>
</feature>
<feature type="zinc finger region" description="C2H2-type 4" evidence="2">
    <location>
        <begin position="440"/>
        <end position="463"/>
    </location>
</feature>
<feature type="zinc finger region" description="C2H2-type 5" evidence="2">
    <location>
        <begin position="471"/>
        <end position="493"/>
    </location>
</feature>
<feature type="zinc finger region" description="C2H2-type 6" evidence="2">
    <location>
        <begin position="593"/>
        <end position="616"/>
    </location>
</feature>
<feature type="zinc finger region" description="C2H2-type 7" evidence="2">
    <location>
        <begin position="835"/>
        <end position="858"/>
    </location>
</feature>
<feature type="zinc finger region" description="C2H2-type 8" evidence="2">
    <location>
        <begin position="878"/>
        <end position="900"/>
    </location>
</feature>
<feature type="zinc finger region" description="C2H2-type 9" evidence="2">
    <location>
        <begin position="917"/>
        <end position="940"/>
    </location>
</feature>
<feature type="zinc finger region" description="C2H2-type 10" evidence="2">
    <location>
        <begin position="1023"/>
        <end position="1046"/>
    </location>
</feature>
<feature type="zinc finger region" description="C2H2-type 11" evidence="2">
    <location>
        <begin position="1254"/>
        <end position="1277"/>
    </location>
</feature>
<feature type="zinc finger region" description="C2H2-type 12" evidence="2">
    <location>
        <begin position="1459"/>
        <end position="1482"/>
    </location>
</feature>
<feature type="zinc finger region" description="C2H2-type 13" evidence="2">
    <location>
        <begin position="1504"/>
        <end position="1527"/>
    </location>
</feature>
<feature type="zinc finger region" description="C2H2-type 14" evidence="2">
    <location>
        <begin position="1566"/>
        <end position="1589"/>
    </location>
</feature>
<feature type="zinc finger region" description="C2H2-type 15" evidence="2">
    <location>
        <begin position="1649"/>
        <end position="1672"/>
    </location>
</feature>
<feature type="zinc finger region" description="C2H2-type 16" evidence="2">
    <location>
        <begin position="1686"/>
        <end position="1709"/>
    </location>
</feature>
<feature type="zinc finger region" description="C2H2-type 17" evidence="2">
    <location>
        <begin position="1881"/>
        <end position="1903"/>
    </location>
</feature>
<feature type="zinc finger region" description="C2H2-type 18; degenerate" evidence="2">
    <location>
        <begin position="1957"/>
        <end position="1981"/>
    </location>
</feature>
<feature type="zinc finger region" description="C2H2-type 19" evidence="2">
    <location>
        <begin position="2014"/>
        <end position="2037"/>
    </location>
</feature>
<feature type="zinc finger region" description="C2H2-type 20" evidence="2">
    <location>
        <begin position="2043"/>
        <end position="2066"/>
    </location>
</feature>
<feature type="zinc finger region" description="C2H2-type 21" evidence="2">
    <location>
        <begin position="2072"/>
        <end position="2095"/>
    </location>
</feature>
<feature type="zinc finger region" description="C2H2-type 22" evidence="2">
    <location>
        <begin position="2180"/>
        <end position="2203"/>
    </location>
</feature>
<feature type="zinc finger region" description="C2H2-type 23" evidence="2">
    <location>
        <begin position="2209"/>
        <end position="2232"/>
    </location>
</feature>
<feature type="zinc finger region" description="C2H2-type 24" evidence="2">
    <location>
        <begin position="2243"/>
        <end position="2265"/>
    </location>
</feature>
<feature type="zinc finger region" description="C2H2-type 25" evidence="2">
    <location>
        <begin position="2289"/>
        <end position="2311"/>
    </location>
</feature>
<feature type="zinc finger region" description="C2H2-type 26" evidence="2">
    <location>
        <begin position="2317"/>
        <end position="2340"/>
    </location>
</feature>
<feature type="zinc finger region" description="C2H2-type 27" evidence="2">
    <location>
        <begin position="2403"/>
        <end position="2425"/>
    </location>
</feature>
<feature type="region of interest" description="Interaction with PBX1" evidence="5">
    <location>
        <begin position="215"/>
        <end position="241"/>
    </location>
</feature>
<feature type="region of interest" description="Disordered" evidence="3">
    <location>
        <begin position="278"/>
        <end position="301"/>
    </location>
</feature>
<feature type="region of interest" description="Disordered" evidence="3">
    <location>
        <begin position="329"/>
        <end position="357"/>
    </location>
</feature>
<feature type="region of interest" description="Disordered" evidence="3">
    <location>
        <begin position="370"/>
        <end position="395"/>
    </location>
</feature>
<feature type="region of interest" description="Disordered" evidence="3">
    <location>
        <begin position="492"/>
        <end position="590"/>
    </location>
</feature>
<feature type="region of interest" description="Disordered" evidence="3">
    <location>
        <begin position="629"/>
        <end position="654"/>
    </location>
</feature>
<feature type="region of interest" description="Disordered" evidence="3">
    <location>
        <begin position="980"/>
        <end position="999"/>
    </location>
</feature>
<feature type="region of interest" description="Disordered" evidence="3">
    <location>
        <begin position="2112"/>
        <end position="2172"/>
    </location>
</feature>
<feature type="region of interest" description="Disordered" evidence="3">
    <location>
        <begin position="2361"/>
        <end position="2387"/>
    </location>
</feature>
<feature type="compositionally biased region" description="Low complexity" evidence="3">
    <location>
        <begin position="332"/>
        <end position="343"/>
    </location>
</feature>
<feature type="compositionally biased region" description="Polar residues" evidence="3">
    <location>
        <begin position="370"/>
        <end position="387"/>
    </location>
</feature>
<feature type="compositionally biased region" description="Polar residues" evidence="3">
    <location>
        <begin position="493"/>
        <end position="502"/>
    </location>
</feature>
<feature type="compositionally biased region" description="Low complexity" evidence="3">
    <location>
        <begin position="503"/>
        <end position="515"/>
    </location>
</feature>
<feature type="compositionally biased region" description="Pro residues" evidence="3">
    <location>
        <begin position="542"/>
        <end position="590"/>
    </location>
</feature>
<feature type="compositionally biased region" description="Polar residues" evidence="3">
    <location>
        <begin position="641"/>
        <end position="654"/>
    </location>
</feature>
<feature type="compositionally biased region" description="Polar residues" evidence="3">
    <location>
        <begin position="2112"/>
        <end position="2121"/>
    </location>
</feature>
<feature type="compositionally biased region" description="Polar residues" evidence="3">
    <location>
        <begin position="2132"/>
        <end position="2149"/>
    </location>
</feature>
<feature type="compositionally biased region" description="Basic and acidic residues" evidence="3">
    <location>
        <begin position="2377"/>
        <end position="2387"/>
    </location>
</feature>
<feature type="modified residue" description="Phosphoserine" evidence="1">
    <location>
        <position position="351"/>
    </location>
</feature>
<feature type="modified residue" description="Phosphoserine" evidence="1">
    <location>
        <position position="355"/>
    </location>
</feature>
<feature type="modified residue" description="Phosphoserine" evidence="1">
    <location>
        <position position="681"/>
    </location>
</feature>
<feature type="modified residue" description="Phosphoserine" evidence="1">
    <location>
        <position position="1083"/>
    </location>
</feature>
<feature type="modified residue" description="Phosphoserine" evidence="1">
    <location>
        <position position="1159"/>
    </location>
</feature>
<feature type="modified residue" description="N6-methyllysine" evidence="1">
    <location>
        <position position="1993"/>
    </location>
</feature>
<feature type="modified residue" description="Phosphoserine" evidence="1">
    <location>
        <position position="2161"/>
    </location>
</feature>
<feature type="modified residue" description="Phosphoserine" evidence="1">
    <location>
        <position position="2166"/>
    </location>
</feature>
<feature type="cross-link" description="Glycyl lysine isopeptide (Lys-Gly) (interchain with G-Cter in SUMO1); alternate" evidence="1">
    <location>
        <position position="20"/>
    </location>
</feature>
<feature type="cross-link" description="Glycyl lysine isopeptide (Lys-Gly) (interchain with G-Cter in SUMO2); alternate" evidence="1">
    <location>
        <position position="20"/>
    </location>
</feature>
<feature type="cross-link" description="Glycyl lysine isopeptide (Lys-Gly) (interchain with G-Cter in SUMO2)" evidence="1">
    <location>
        <position position="234"/>
    </location>
</feature>
<feature type="cross-link" description="Glycyl lysine isopeptide (Lys-Gly) (interchain with G-Cter in SUMO2)" evidence="1">
    <location>
        <position position="271"/>
    </location>
</feature>
<feature type="cross-link" description="Glycyl lysine isopeptide (Lys-Gly) (interchain with G-Cter in SUMO2)" evidence="1">
    <location>
        <position position="337"/>
    </location>
</feature>
<feature type="cross-link" description="Glycyl lysine isopeptide (Lys-Gly) (interchain with G-Cter in SUMO2)" evidence="1">
    <location>
        <position position="348"/>
    </location>
</feature>
<feature type="cross-link" description="Glycyl lysine isopeptide (Lys-Gly) (interchain with G-Cter in SUMO2)" evidence="1">
    <location>
        <position position="350"/>
    </location>
</feature>
<feature type="cross-link" description="Glycyl lysine isopeptide (Lys-Gly) (interchain with G-Cter in SUMO2)" evidence="1">
    <location>
        <position position="429"/>
    </location>
</feature>
<feature type="cross-link" description="Glycyl lysine isopeptide (Lys-Gly) (interchain with G-Cter in SUMO2)" evidence="1">
    <location>
        <position position="485"/>
    </location>
</feature>
<feature type="cross-link" description="Glycyl lysine isopeptide (Lys-Gly) (interchain with G-Cter in SUMO2)" evidence="1">
    <location>
        <position position="624"/>
    </location>
</feature>
<feature type="cross-link" description="Glycyl lysine isopeptide (Lys-Gly) (interchain with G-Cter in SUMO2)" evidence="1">
    <location>
        <position position="650"/>
    </location>
</feature>
<feature type="cross-link" description="Glycyl lysine isopeptide (Lys-Gly) (interchain with G-Cter in SUMO2)" evidence="1">
    <location>
        <position position="661"/>
    </location>
</feature>
<feature type="cross-link" description="Glycyl lysine isopeptide (Lys-Gly) (interchain with G-Cter in SUMO2)" evidence="1">
    <location>
        <position position="699"/>
    </location>
</feature>
<feature type="cross-link" description="Glycyl lysine isopeptide (Lys-Gly) (interchain with G-Cter in SUMO2)" evidence="1">
    <location>
        <position position="978"/>
    </location>
</feature>
<feature type="cross-link" description="Glycyl lysine isopeptide (Lys-Gly) (interchain with G-Cter in SUMO2)" evidence="1">
    <location>
        <position position="1128"/>
    </location>
</feature>
<feature type="cross-link" description="Glycyl lysine isopeptide (Lys-Gly) (interchain with G-Cter in SUMO2)" evidence="1">
    <location>
        <position position="1196"/>
    </location>
</feature>
<feature type="cross-link" description="Glycyl lysine isopeptide (Lys-Gly) (interchain with G-Cter in SUMO2)" evidence="1">
    <location>
        <position position="1204"/>
    </location>
</feature>
<feature type="cross-link" description="Glycyl lysine isopeptide (Lys-Gly) (interchain with G-Cter in SUMO2)" evidence="1">
    <location>
        <position position="1210"/>
    </location>
</feature>
<feature type="cross-link" description="Glycyl lysine isopeptide (Lys-Gly) (interchain with G-Cter in SUMO2)" evidence="1">
    <location>
        <position position="1232"/>
    </location>
</feature>
<feature type="cross-link" description="Glycyl lysine isopeptide (Lys-Gly) (interchain with G-Cter in SUMO2)" evidence="1">
    <location>
        <position position="1488"/>
    </location>
</feature>
<feature type="cross-link" description="Glycyl lysine isopeptide (Lys-Gly) (interchain with G-Cter in SUMO2)" evidence="1">
    <location>
        <position position="1560"/>
    </location>
</feature>
<feature type="cross-link" description="Glycyl lysine isopeptide (Lys-Gly) (interchain with G-Cter in SUMO2)" evidence="1">
    <location>
        <position position="1580"/>
    </location>
</feature>
<feature type="cross-link" description="Glycyl lysine isopeptide (Lys-Gly) (interchain with G-Cter in SUMO2)" evidence="1">
    <location>
        <position position="1687"/>
    </location>
</feature>
<feature type="cross-link" description="Glycyl lysine isopeptide (Lys-Gly) (interchain with G-Cter in SUMO2)" evidence="1">
    <location>
        <position position="1769"/>
    </location>
</feature>
<feature type="cross-link" description="Glycyl lysine isopeptide (Lys-Gly) (interchain with G-Cter in SUMO2)" evidence="1">
    <location>
        <position position="1935"/>
    </location>
</feature>
<feature type="cross-link" description="Glycyl lysine isopeptide (Lys-Gly) (interchain with G-Cter in SUMO2)" evidence="1">
    <location>
        <position position="2093"/>
    </location>
</feature>
<feature type="cross-link" description="Glycyl lysine isopeptide (Lys-Gly) (interchain with G-Cter in SUMO2)" evidence="1">
    <location>
        <position position="2282"/>
    </location>
</feature>
<feature type="cross-link" description="Glycyl lysine isopeptide (Lys-Gly) (interchain with G-Cter in SUMO2)" evidence="1">
    <location>
        <position position="2493"/>
    </location>
</feature>
<feature type="sequence conflict" description="In Ref. 1; ABC79685." evidence="11" ref="1">
    <original>C</original>
    <variation>R</variation>
    <location>
        <position position="167"/>
    </location>
</feature>
<feature type="sequence conflict" description="In Ref. 1; ABC79685." evidence="11" ref="1">
    <original>A</original>
    <variation>V</variation>
    <location>
        <position position="287"/>
    </location>
</feature>
<feature type="sequence conflict" description="In Ref. 1; ABC79685." evidence="11" ref="1">
    <original>P</original>
    <variation>Q</variation>
    <location>
        <position position="561"/>
    </location>
</feature>
<feature type="sequence conflict" description="In Ref. 1; ABC79685." evidence="11" ref="1">
    <original>V</original>
    <variation>VPPQPQ</variation>
    <location>
        <position position="574"/>
    </location>
</feature>
<organism>
    <name type="scientific">Mus musculus</name>
    <name type="common">Mouse</name>
    <dbReference type="NCBI Taxonomy" id="10090"/>
    <lineage>
        <taxon>Eukaryota</taxon>
        <taxon>Metazoa</taxon>
        <taxon>Chordata</taxon>
        <taxon>Craniata</taxon>
        <taxon>Vertebrata</taxon>
        <taxon>Euteleostomi</taxon>
        <taxon>Mammalia</taxon>
        <taxon>Eutheria</taxon>
        <taxon>Euarchontoglires</taxon>
        <taxon>Glires</taxon>
        <taxon>Rodentia</taxon>
        <taxon>Myomorpha</taxon>
        <taxon>Muroidea</taxon>
        <taxon>Muridae</taxon>
        <taxon>Murinae</taxon>
        <taxon>Mus</taxon>
        <taxon>Mus</taxon>
    </lineage>
</organism>
<evidence type="ECO:0000250" key="1">
    <source>
        <dbReference type="UniProtKB" id="Q96JM2"/>
    </source>
</evidence>
<evidence type="ECO:0000255" key="2">
    <source>
        <dbReference type="PROSITE-ProRule" id="PRU00042"/>
    </source>
</evidence>
<evidence type="ECO:0000256" key="3">
    <source>
        <dbReference type="SAM" id="MobiDB-lite"/>
    </source>
</evidence>
<evidence type="ECO:0000269" key="4">
    <source>
    </source>
</evidence>
<evidence type="ECO:0000269" key="5">
    <source>
    </source>
</evidence>
<evidence type="ECO:0000269" key="6">
    <source>
    </source>
</evidence>
<evidence type="ECO:0000269" key="7">
    <source>
    </source>
</evidence>
<evidence type="ECO:0000269" key="8">
    <source>
    </source>
</evidence>
<evidence type="ECO:0000303" key="9">
    <source>
    </source>
</evidence>
<evidence type="ECO:0000303" key="10">
    <source>
    </source>
</evidence>
<evidence type="ECO:0000305" key="11"/>
<evidence type="ECO:0000312" key="12">
    <source>
        <dbReference type="EMBL" id="ABC79685.1"/>
    </source>
</evidence>
<evidence type="ECO:0000312" key="13">
    <source>
        <dbReference type="MGI" id="MGI:107690"/>
    </source>
</evidence>
<evidence type="ECO:0000312" key="14">
    <source>
        <dbReference type="Proteomes" id="UP000000589"/>
    </source>
</evidence>
<evidence type="ECO:0007744" key="15">
    <source>
    </source>
</evidence>
<keyword id="KW-0238">DNA-binding</keyword>
<keyword id="KW-1017">Isopeptide bond</keyword>
<keyword id="KW-0479">Metal-binding</keyword>
<keyword id="KW-0488">Methylation</keyword>
<keyword id="KW-0539">Nucleus</keyword>
<keyword id="KW-0597">Phosphoprotein</keyword>
<keyword id="KW-1185">Reference proteome</keyword>
<keyword id="KW-0677">Repeat</keyword>
<keyword id="KW-0804">Transcription</keyword>
<keyword id="KW-0805">Transcription regulation</keyword>
<keyword id="KW-0832">Ubl conjugation</keyword>
<keyword id="KW-0862">Zinc</keyword>
<keyword id="KW-0863">Zinc-finger</keyword>
<sequence length="2495" mass="282713">MEVLQCDGCDFRAPSYEDLKAHIQDVHTAFLQPTDVAEDNDDEPLSGSMNASNQTEVEFSSIKDEFVIAEDLPGQSATALGSGGYYGHSPGYYGQHITPNPKPTNKFFQCKFCVRYFRSKNLLIEHTRKVHGAQAEESPTGPPVPGSLNYNIMMHEGFGKVFSCQFCTYKSPRRARIIKHQKMYHKNSLKESTAPPPAPAPLPDPLVPPVSLQDPCKELPAEVVERSILESMVKPLTKSRGNFCCEWCSYQTPRRERWCDHMMKKHRSMVKILSSIRQQEGPNVSEAQNDNEPSPTSNSTYLSMNAASREMPNANVSNFRGSMGNSIMRPNSSSTSKFSSSMSYPQMKPKSPHNSGLVNLTERSRYGMSDMTNSSADLDTNSMLNDSSSDEDLNEVDSENGLSVLDHQASGLSAEQLMGSDGNKLLETKGIPFRRFMNRFQCPFCPFLTMHRRSISRHIENIHLSGKTAVYKCDECPFTCKSSLKLGAHKQCHTGTSDWDTVNSQSESLSSSLNEGMVSYESSSINGRKSGVMLDPLQQQQPPQPPPPLPPPPPPPSQPLPQPPPPPLQSPHQVPPPTQQPQPPTQAPPLHPYKCTMCSYSTMTLKGLRVHQQHKHSFCDNLPKFEGQPSSLPLENETDSHPSSSNTVKKSQTSILGLSSKNNFVAKANRKLASDFPLDLSPVKKRTRIDEIASNLQSKINQTKLQEDAIINVEDDEEEEDDNEVEIEVELDREEEATDPIMEVPTAFSAQQIWARDASEAQKEPNYRSITHDYTATNGAEIELTLSEDEEDYYGSSASMKDQVSNAALLNTQPAIYGTEPSNENTDFGDSGRLYYCKHCDFNNKSARSVSTHYQRMHPYIKFSFRYILDPNDHSAVYRCLECYIDYTNFEDLQQHYGEHHPEAMNVLNFDHSDLIYRCRFCSYTSPNVRSLMPHYQRMHPTVKINNAMIFSSYVVEQQEGLNAESQTLREILNSAPKSMATSTPVARGGGLPATFNKNTPPKTFTPECESQKDPSVNTVVVYDCDVCSFASPNMHSVLVHYQKKHPEEKASYFRIQKTMRMVSVDRGSALSQLSFEVGAPMSPKMSNMGSPPPPQPPPPDLSIELYYCKHCSYSNRSVVGVLVHYQKRHPEIKVTAKYIRQAPPTAAMMRGAEGLQDSPRPPAPLQLNSSERDCPPVETEMFFCQHCDYGNRTVKGVLIHYQKKHRDFKANADVIRQHTATIRSLCDRNQKPASCVLLPASGMERDKTKLRALKCRQCSYTSPYFYALRKHIKKDHPALKATVTSIMRWAFLDGLIEAGYHCEWCIYSHMEPSGLLLHYQRRHPEHYVDYTYMATKLWAGPDPSSPTLTMSAEAKTYRCRDCVFEAVSIWDITNHYQAFHPWAMNGDESVLLDIIKEKDGVDKALLAPEELIGPVNCENSIPNPLPEQEAECPEDARLSPEKSIHLASANPAISSTPYQCTVCQSEYNNLHGLLTHYGKKHPGMKVKAADFAQDIDINPGAVYKCRHCPYINTRIHGVLTHYQKRHPAIKVTAEDFVHDVEQSADISQNDVEETSRIFKQGYGAYRCKLCPYTHGTLEKLKIHYEKYHNQPEFDVFSPPPPKLPVSLEPEITTEVSPSQVSVTEEEVGEDPMSTAHFSTSHLVSHTVFRCQLCKYFCSTRKGIARHYRIKHNNVRAQPEGKNNLFKCALCAYTNPIRKGLAAHYQKRHDIDAYYTHCLAASRTISDKPNKVIIPSPPKDDSPQLSEELRRAVEKKKCSLCSFQSFSKKGIVSHYMKRHPGVFPKKQHASKLGGYFTAVYADEHEKPPLMEEEERSSFERAEVEGEAQDIEWLPFRCIKCFKLSFSTAELLCMHYTDHHSRDLKRDFVILGSGPRFQNSTFQCKHCDSKLQSIAELTSHLNIHNEEFQKRAKRQERRKQLLSKQKYADGAFADFKQERPFGHLEEVPKIKERKVVGYKCKFCVEVHPTLRAICNHLRKHVQYGSVPAVSAAVKGLRSHERSHLALAMFTREDKYSCQYCSFVSAFRHNLDRHMQTHHGHHKPFRCKLCSFKSSYNSRLKTHILKAHAGEHAYKCSWCSFSTMTISQLKEHSLKVHGKALTLPRPRIVSLLSSHAHPSSQKATPAEEVEDSNDSSYSEPPDVQQQLNHYQSAALARNKSRVSPVPPSGTAAGTEQKAEAVLHCEFCEFSSGYIQSIRRHYRDKHGGKKLFKCKDCSFYTGFKSAFTMHVEAGHSAVPEEGPKDLRCPLCLYHTKYKRNMIDHIVLHREERVVPIEVCRSKLSKYLQGVVFRCDKCTFTCSSDESLQQHIEKHNELKPYKCQLCYYETKHTEELDTHLRDEHKVSRNFELVGRVNLDQLEQMKEKIESSSSEDEDKDDEMSSKAEDRELMRFADRGPGVNTEKRFPCEFCGRAFSQGSEWERHVLRHGMSLHDTNQVSRNEIHTKEMVEESMQLPSIEAKEDDEPIGIDFPLKSETVTICVVAADKSLLEDAEAKNE</sequence>
<proteinExistence type="evidence at protein level"/>
<gene>
    <name evidence="11" type="primary">Znf462</name>
    <name evidence="13" type="synonym">Zfp462</name>
</gene>
<protein>
    <recommendedName>
        <fullName evidence="9">Zinc finger protein 462</fullName>
    </recommendedName>
    <alternativeName>
        <fullName evidence="10">Zinc finger PBX1-interacting protein</fullName>
        <shortName evidence="10">ZFPIP</shortName>
    </alternativeName>
</protein>
<name>ZN462_MOUSE</name>
<dbReference type="EMBL" id="DQ355518">
    <property type="protein sequence ID" value="ABC79685.1"/>
    <property type="molecule type" value="mRNA"/>
</dbReference>
<dbReference type="EMBL" id="AL772186">
    <property type="status" value="NOT_ANNOTATED_CDS"/>
    <property type="molecule type" value="Genomic_DNA"/>
</dbReference>
<dbReference type="EMBL" id="AL844140">
    <property type="status" value="NOT_ANNOTATED_CDS"/>
    <property type="molecule type" value="Genomic_DNA"/>
</dbReference>
<dbReference type="CCDS" id="CCDS38764.1"/>
<dbReference type="RefSeq" id="NP_766455.2">
    <property type="nucleotide sequence ID" value="NM_172867.3"/>
</dbReference>
<dbReference type="FunCoup" id="B1AWL2">
    <property type="interactions" value="2487"/>
</dbReference>
<dbReference type="IntAct" id="B1AWL2">
    <property type="interactions" value="4"/>
</dbReference>
<dbReference type="MINT" id="B1AWL2"/>
<dbReference type="STRING" id="10090.ENSMUSP00000095677"/>
<dbReference type="GlyGen" id="B1AWL2">
    <property type="glycosylation" value="2 sites, 1 O-linked glycan (2 sites)"/>
</dbReference>
<dbReference type="iPTMnet" id="B1AWL2"/>
<dbReference type="PhosphoSitePlus" id="B1AWL2"/>
<dbReference type="PaxDb" id="10090-ENSMUSP00000095677"/>
<dbReference type="PeptideAtlas" id="B1AWL2"/>
<dbReference type="ProteomicsDB" id="345506"/>
<dbReference type="Pumba" id="B1AWL2"/>
<dbReference type="Antibodypedia" id="14859">
    <property type="antibodies" value="66 antibodies from 19 providers"/>
</dbReference>
<dbReference type="DNASU" id="242466"/>
<dbReference type="Ensembl" id="ENSMUST00000098070.10">
    <property type="protein sequence ID" value="ENSMUSP00000095677.4"/>
    <property type="gene ID" value="ENSMUSG00000060206.12"/>
</dbReference>
<dbReference type="GeneID" id="242466"/>
<dbReference type="KEGG" id="mmu:242466"/>
<dbReference type="UCSC" id="uc008sxi.1">
    <property type="organism name" value="mouse"/>
</dbReference>
<dbReference type="AGR" id="MGI:107690"/>
<dbReference type="CTD" id="242466"/>
<dbReference type="MGI" id="MGI:107690">
    <property type="gene designation" value="Zfp462"/>
</dbReference>
<dbReference type="VEuPathDB" id="HostDB:ENSMUSG00000060206"/>
<dbReference type="eggNOG" id="KOG1721">
    <property type="taxonomic scope" value="Eukaryota"/>
</dbReference>
<dbReference type="GeneTree" id="ENSGT00940000156411"/>
<dbReference type="InParanoid" id="B1AWL2"/>
<dbReference type="OMA" id="CAFQSFS"/>
<dbReference type="OrthoDB" id="4737882at2759"/>
<dbReference type="PhylomeDB" id="B1AWL2"/>
<dbReference type="TreeFam" id="TF325534"/>
<dbReference type="BioGRID-ORCS" id="242466">
    <property type="hits" value="2 hits in 79 CRISPR screens"/>
</dbReference>
<dbReference type="ChiTaRS" id="Zfp462">
    <property type="organism name" value="mouse"/>
</dbReference>
<dbReference type="PRO" id="PR:B1AWL2"/>
<dbReference type="Proteomes" id="UP000000589">
    <property type="component" value="Chromosome 4"/>
</dbReference>
<dbReference type="RNAct" id="B1AWL2">
    <property type="molecule type" value="protein"/>
</dbReference>
<dbReference type="Bgee" id="ENSMUSG00000060206">
    <property type="expression patterns" value="Expressed in undifferentiated genital tubercle and 263 other cell types or tissues"/>
</dbReference>
<dbReference type="ExpressionAtlas" id="B1AWL2">
    <property type="expression patterns" value="baseline and differential"/>
</dbReference>
<dbReference type="GO" id="GO:0005654">
    <property type="term" value="C:nucleoplasm"/>
    <property type="evidence" value="ECO:0007669"/>
    <property type="project" value="Ensembl"/>
</dbReference>
<dbReference type="GO" id="GO:0005634">
    <property type="term" value="C:nucleus"/>
    <property type="evidence" value="ECO:0000314"/>
    <property type="project" value="MGI"/>
</dbReference>
<dbReference type="GO" id="GO:0003677">
    <property type="term" value="F:DNA binding"/>
    <property type="evidence" value="ECO:0007669"/>
    <property type="project" value="UniProtKB-KW"/>
</dbReference>
<dbReference type="GO" id="GO:0008270">
    <property type="term" value="F:zinc ion binding"/>
    <property type="evidence" value="ECO:0007669"/>
    <property type="project" value="UniProtKB-KW"/>
</dbReference>
<dbReference type="GO" id="GO:0006325">
    <property type="term" value="P:chromatin organization"/>
    <property type="evidence" value="ECO:0000315"/>
    <property type="project" value="MGI"/>
</dbReference>
<dbReference type="GO" id="GO:0045944">
    <property type="term" value="P:positive regulation of transcription by RNA polymerase II"/>
    <property type="evidence" value="ECO:0000314"/>
    <property type="project" value="MGI"/>
</dbReference>
<dbReference type="FunFam" id="3.30.160.60:FF:000403">
    <property type="entry name" value="Putative zinc finger protein 462"/>
    <property type="match status" value="1"/>
</dbReference>
<dbReference type="FunFam" id="3.30.160.60:FF:000541">
    <property type="entry name" value="Zinc finger protein 462"/>
    <property type="match status" value="1"/>
</dbReference>
<dbReference type="FunFam" id="3.30.160.60:FF:000655">
    <property type="entry name" value="Zinc finger protein 462"/>
    <property type="match status" value="1"/>
</dbReference>
<dbReference type="FunFam" id="3.30.160.60:FF:000734">
    <property type="entry name" value="Zinc finger protein 462"/>
    <property type="match status" value="1"/>
</dbReference>
<dbReference type="FunFam" id="3.30.160.60:FF:001043">
    <property type="entry name" value="Zinc finger protein 462"/>
    <property type="match status" value="1"/>
</dbReference>
<dbReference type="FunFam" id="3.30.160.60:FF:001131">
    <property type="entry name" value="Zinc finger protein 462"/>
    <property type="match status" value="1"/>
</dbReference>
<dbReference type="FunFam" id="3.30.160.60:FF:000559">
    <property type="entry name" value="zinc finger protein 462 isoform X1"/>
    <property type="match status" value="1"/>
</dbReference>
<dbReference type="FunFam" id="3.30.160.60:FF:000613">
    <property type="entry name" value="zinc finger protein 462 isoform X1"/>
    <property type="match status" value="1"/>
</dbReference>
<dbReference type="Gene3D" id="3.30.160.60">
    <property type="entry name" value="Classic Zinc Finger"/>
    <property type="match status" value="9"/>
</dbReference>
<dbReference type="InterPro" id="IPR050688">
    <property type="entry name" value="Zinc_finger/UBP_domain"/>
</dbReference>
<dbReference type="InterPro" id="IPR036236">
    <property type="entry name" value="Znf_C2H2_sf"/>
</dbReference>
<dbReference type="InterPro" id="IPR013087">
    <property type="entry name" value="Znf_C2H2_type"/>
</dbReference>
<dbReference type="PANTHER" id="PTHR24403">
    <property type="entry name" value="ZINC FINGER PROTEIN"/>
    <property type="match status" value="1"/>
</dbReference>
<dbReference type="PANTHER" id="PTHR24403:SF58">
    <property type="entry name" value="ZINC FINGER PROTEIN 462"/>
    <property type="match status" value="1"/>
</dbReference>
<dbReference type="Pfam" id="PF23224">
    <property type="entry name" value="zf-C2H2_2nd_ZNF462"/>
    <property type="match status" value="1"/>
</dbReference>
<dbReference type="Pfam" id="PF23225">
    <property type="entry name" value="zf-C2H2_7th_ZNF462"/>
    <property type="match status" value="7"/>
</dbReference>
<dbReference type="Pfam" id="PF23223">
    <property type="entry name" value="zf-C2H2_ZNF462"/>
    <property type="match status" value="1"/>
</dbReference>
<dbReference type="Pfam" id="PF23075">
    <property type="entry name" value="zf-C2H2_ZNF462_11"/>
    <property type="match status" value="2"/>
</dbReference>
<dbReference type="Pfam" id="PF23077">
    <property type="entry name" value="zf-C2H2_ZNF462_1st"/>
    <property type="match status" value="1"/>
</dbReference>
<dbReference type="SMART" id="SM00355">
    <property type="entry name" value="ZnF_C2H2"/>
    <property type="match status" value="34"/>
</dbReference>
<dbReference type="SUPFAM" id="SSF57667">
    <property type="entry name" value="beta-beta-alpha zinc fingers"/>
    <property type="match status" value="3"/>
</dbReference>
<dbReference type="PROSITE" id="PS00028">
    <property type="entry name" value="ZINC_FINGER_C2H2_1"/>
    <property type="match status" value="8"/>
</dbReference>
<dbReference type="PROSITE" id="PS50157">
    <property type="entry name" value="ZINC_FINGER_C2H2_2"/>
    <property type="match status" value="9"/>
</dbReference>
<accession>B1AWL2</accession>
<accession>A2SW42</accession>